<dbReference type="EMBL" id="AF152470">
    <property type="protein sequence ID" value="AAD34163.2"/>
    <property type="molecule type" value="mRNA"/>
</dbReference>
<dbReference type="EMBL" id="AK007644">
    <property type="protein sequence ID" value="BAB25159.2"/>
    <property type="molecule type" value="mRNA"/>
</dbReference>
<dbReference type="EMBL" id="AK032104">
    <property type="protein sequence ID" value="BAC27703.1"/>
    <property type="molecule type" value="mRNA"/>
</dbReference>
<dbReference type="EMBL" id="BC017551">
    <property type="protein sequence ID" value="AAH17551.1"/>
    <property type="molecule type" value="mRNA"/>
</dbReference>
<dbReference type="CCDS" id="CCDS37252.1"/>
<dbReference type="RefSeq" id="NP_067403.2">
    <property type="nucleotide sequence ID" value="NM_021428.4"/>
</dbReference>
<dbReference type="RefSeq" id="XP_011244293.1">
    <property type="nucleotide sequence ID" value="XM_011245991.1"/>
</dbReference>
<dbReference type="RefSeq" id="XP_017172595.1">
    <property type="nucleotide sequence ID" value="XM_017317106.1"/>
</dbReference>
<dbReference type="RefSeq" id="XP_017172596.1">
    <property type="nucleotide sequence ID" value="XM_017317107.1"/>
</dbReference>
<dbReference type="FunCoup" id="Q9WUQ7">
    <property type="interactions" value="48"/>
</dbReference>
<dbReference type="STRING" id="10090.ENSMUSP00000139108"/>
<dbReference type="PaxDb" id="10090-ENSMUSP00000047676"/>
<dbReference type="Antibodypedia" id="11474">
    <property type="antibodies" value="111 antibodies from 21 providers"/>
</dbReference>
<dbReference type="DNASU" id="58239"/>
<dbReference type="Ensembl" id="ENSMUST00000038281.6">
    <property type="protein sequence ID" value="ENSMUSP00000047676.6"/>
    <property type="gene ID" value="ENSMUSG00000038055.13"/>
</dbReference>
<dbReference type="Ensembl" id="ENSMUST00000184863.8">
    <property type="protein sequence ID" value="ENSMUSP00000139108.2"/>
    <property type="gene ID" value="ENSMUSG00000038055.13"/>
</dbReference>
<dbReference type="GeneID" id="58239"/>
<dbReference type="KEGG" id="mmu:58239"/>
<dbReference type="UCSC" id="uc007ydx.1">
    <property type="organism name" value="mouse"/>
</dbReference>
<dbReference type="AGR" id="MGI:1926236"/>
<dbReference type="CTD" id="28955"/>
<dbReference type="MGI" id="MGI:1926236">
    <property type="gene designation" value="Dexi"/>
</dbReference>
<dbReference type="VEuPathDB" id="HostDB:ENSMUSG00000038055"/>
<dbReference type="eggNOG" id="ENOG502S66C">
    <property type="taxonomic scope" value="Eukaryota"/>
</dbReference>
<dbReference type="GeneTree" id="ENSGT00390000013271"/>
<dbReference type="HOGENOM" id="CLU_184633_0_0_1"/>
<dbReference type="InParanoid" id="Q9WUQ7"/>
<dbReference type="OMA" id="IPYMFYL"/>
<dbReference type="OrthoDB" id="9937503at2759"/>
<dbReference type="PhylomeDB" id="Q9WUQ7"/>
<dbReference type="TreeFam" id="TF338557"/>
<dbReference type="BioGRID-ORCS" id="58239">
    <property type="hits" value="1 hit in 78 CRISPR screens"/>
</dbReference>
<dbReference type="ChiTaRS" id="Dexi">
    <property type="organism name" value="mouse"/>
</dbReference>
<dbReference type="PRO" id="PR:Q9WUQ7"/>
<dbReference type="Proteomes" id="UP000000589">
    <property type="component" value="Chromosome 16"/>
</dbReference>
<dbReference type="RNAct" id="Q9WUQ7">
    <property type="molecule type" value="protein"/>
</dbReference>
<dbReference type="Bgee" id="ENSMUSG00000038055">
    <property type="expression patterns" value="Expressed in pontine nuclear group and 240 other cell types or tissues"/>
</dbReference>
<dbReference type="InterPro" id="IPR023259">
    <property type="entry name" value="Dexamethasone-induced"/>
</dbReference>
<dbReference type="PANTHER" id="PTHR17070">
    <property type="entry name" value="DEXAMETHASONE-INDUCED PROTEIN"/>
    <property type="match status" value="1"/>
</dbReference>
<dbReference type="PANTHER" id="PTHR17070:SF0">
    <property type="entry name" value="DEXAMETHASONE-INDUCED PROTEIN"/>
    <property type="match status" value="1"/>
</dbReference>
<dbReference type="Pfam" id="PF15198">
    <property type="entry name" value="Dexa_ind"/>
    <property type="match status" value="1"/>
</dbReference>
<dbReference type="PRINTS" id="PR02032">
    <property type="entry name" value="DEXMETHSNEIP"/>
</dbReference>
<feature type="chain" id="PRO_0000096670" description="Dexamethasone-induced protein">
    <location>
        <begin position="1"/>
        <end position="95"/>
    </location>
</feature>
<name>DEXI_MOUSE</name>
<gene>
    <name type="primary">Dexi</name>
    <name type="synonym">Myle</name>
</gene>
<comment type="similarity">
    <text evidence="1">Belongs to the DEXI family.</text>
</comment>
<protein>
    <recommendedName>
        <fullName>Dexamethasone-induced protein</fullName>
    </recommendedName>
    <alternativeName>
        <fullName>Protein MYLE</fullName>
    </alternativeName>
</protein>
<reference key="1">
    <citation type="journal article" date="2001" name="Am. J. Respir. Cell Mol. Biol.">
        <title>Cloning of dexamethasone-induced transcript: a novel glucocorticoid-induced gene that is upregulated in emphysema.</title>
        <authorList>
            <person name="Edgar A.J."/>
            <person name="Birks E.J."/>
            <person name="Yacoub M.H."/>
            <person name="Polak J.M."/>
        </authorList>
    </citation>
    <scope>NUCLEOTIDE SEQUENCE [MRNA]</scope>
    <source>
        <tissue>Lung</tissue>
    </source>
</reference>
<reference key="2">
    <citation type="journal article" date="2005" name="Science">
        <title>The transcriptional landscape of the mammalian genome.</title>
        <authorList>
            <person name="Carninci P."/>
            <person name="Kasukawa T."/>
            <person name="Katayama S."/>
            <person name="Gough J."/>
            <person name="Frith M.C."/>
            <person name="Maeda N."/>
            <person name="Oyama R."/>
            <person name="Ravasi T."/>
            <person name="Lenhard B."/>
            <person name="Wells C."/>
            <person name="Kodzius R."/>
            <person name="Shimokawa K."/>
            <person name="Bajic V.B."/>
            <person name="Brenner S.E."/>
            <person name="Batalov S."/>
            <person name="Forrest A.R."/>
            <person name="Zavolan M."/>
            <person name="Davis M.J."/>
            <person name="Wilming L.G."/>
            <person name="Aidinis V."/>
            <person name="Allen J.E."/>
            <person name="Ambesi-Impiombato A."/>
            <person name="Apweiler R."/>
            <person name="Aturaliya R.N."/>
            <person name="Bailey T.L."/>
            <person name="Bansal M."/>
            <person name="Baxter L."/>
            <person name="Beisel K.W."/>
            <person name="Bersano T."/>
            <person name="Bono H."/>
            <person name="Chalk A.M."/>
            <person name="Chiu K.P."/>
            <person name="Choudhary V."/>
            <person name="Christoffels A."/>
            <person name="Clutterbuck D.R."/>
            <person name="Crowe M.L."/>
            <person name="Dalla E."/>
            <person name="Dalrymple B.P."/>
            <person name="de Bono B."/>
            <person name="Della Gatta G."/>
            <person name="di Bernardo D."/>
            <person name="Down T."/>
            <person name="Engstrom P."/>
            <person name="Fagiolini M."/>
            <person name="Faulkner G."/>
            <person name="Fletcher C.F."/>
            <person name="Fukushima T."/>
            <person name="Furuno M."/>
            <person name="Futaki S."/>
            <person name="Gariboldi M."/>
            <person name="Georgii-Hemming P."/>
            <person name="Gingeras T.R."/>
            <person name="Gojobori T."/>
            <person name="Green R.E."/>
            <person name="Gustincich S."/>
            <person name="Harbers M."/>
            <person name="Hayashi Y."/>
            <person name="Hensch T.K."/>
            <person name="Hirokawa N."/>
            <person name="Hill D."/>
            <person name="Huminiecki L."/>
            <person name="Iacono M."/>
            <person name="Ikeo K."/>
            <person name="Iwama A."/>
            <person name="Ishikawa T."/>
            <person name="Jakt M."/>
            <person name="Kanapin A."/>
            <person name="Katoh M."/>
            <person name="Kawasawa Y."/>
            <person name="Kelso J."/>
            <person name="Kitamura H."/>
            <person name="Kitano H."/>
            <person name="Kollias G."/>
            <person name="Krishnan S.P."/>
            <person name="Kruger A."/>
            <person name="Kummerfeld S.K."/>
            <person name="Kurochkin I.V."/>
            <person name="Lareau L.F."/>
            <person name="Lazarevic D."/>
            <person name="Lipovich L."/>
            <person name="Liu J."/>
            <person name="Liuni S."/>
            <person name="McWilliam S."/>
            <person name="Madan Babu M."/>
            <person name="Madera M."/>
            <person name="Marchionni L."/>
            <person name="Matsuda H."/>
            <person name="Matsuzawa S."/>
            <person name="Miki H."/>
            <person name="Mignone F."/>
            <person name="Miyake S."/>
            <person name="Morris K."/>
            <person name="Mottagui-Tabar S."/>
            <person name="Mulder N."/>
            <person name="Nakano N."/>
            <person name="Nakauchi H."/>
            <person name="Ng P."/>
            <person name="Nilsson R."/>
            <person name="Nishiguchi S."/>
            <person name="Nishikawa S."/>
            <person name="Nori F."/>
            <person name="Ohara O."/>
            <person name="Okazaki Y."/>
            <person name="Orlando V."/>
            <person name="Pang K.C."/>
            <person name="Pavan W.J."/>
            <person name="Pavesi G."/>
            <person name="Pesole G."/>
            <person name="Petrovsky N."/>
            <person name="Piazza S."/>
            <person name="Reed J."/>
            <person name="Reid J.F."/>
            <person name="Ring B.Z."/>
            <person name="Ringwald M."/>
            <person name="Rost B."/>
            <person name="Ruan Y."/>
            <person name="Salzberg S.L."/>
            <person name="Sandelin A."/>
            <person name="Schneider C."/>
            <person name="Schoenbach C."/>
            <person name="Sekiguchi K."/>
            <person name="Semple C.A."/>
            <person name="Seno S."/>
            <person name="Sessa L."/>
            <person name="Sheng Y."/>
            <person name="Shibata Y."/>
            <person name="Shimada H."/>
            <person name="Shimada K."/>
            <person name="Silva D."/>
            <person name="Sinclair B."/>
            <person name="Sperling S."/>
            <person name="Stupka E."/>
            <person name="Sugiura K."/>
            <person name="Sultana R."/>
            <person name="Takenaka Y."/>
            <person name="Taki K."/>
            <person name="Tammoja K."/>
            <person name="Tan S.L."/>
            <person name="Tang S."/>
            <person name="Taylor M.S."/>
            <person name="Tegner J."/>
            <person name="Teichmann S.A."/>
            <person name="Ueda H.R."/>
            <person name="van Nimwegen E."/>
            <person name="Verardo R."/>
            <person name="Wei C.L."/>
            <person name="Yagi K."/>
            <person name="Yamanishi H."/>
            <person name="Zabarovsky E."/>
            <person name="Zhu S."/>
            <person name="Zimmer A."/>
            <person name="Hide W."/>
            <person name="Bult C."/>
            <person name="Grimmond S.M."/>
            <person name="Teasdale R.D."/>
            <person name="Liu E.T."/>
            <person name="Brusic V."/>
            <person name="Quackenbush J."/>
            <person name="Wahlestedt C."/>
            <person name="Mattick J.S."/>
            <person name="Hume D.A."/>
            <person name="Kai C."/>
            <person name="Sasaki D."/>
            <person name="Tomaru Y."/>
            <person name="Fukuda S."/>
            <person name="Kanamori-Katayama M."/>
            <person name="Suzuki M."/>
            <person name="Aoki J."/>
            <person name="Arakawa T."/>
            <person name="Iida J."/>
            <person name="Imamura K."/>
            <person name="Itoh M."/>
            <person name="Kato T."/>
            <person name="Kawaji H."/>
            <person name="Kawagashira N."/>
            <person name="Kawashima T."/>
            <person name="Kojima M."/>
            <person name="Kondo S."/>
            <person name="Konno H."/>
            <person name="Nakano K."/>
            <person name="Ninomiya N."/>
            <person name="Nishio T."/>
            <person name="Okada M."/>
            <person name="Plessy C."/>
            <person name="Shibata K."/>
            <person name="Shiraki T."/>
            <person name="Suzuki S."/>
            <person name="Tagami M."/>
            <person name="Waki K."/>
            <person name="Watahiki A."/>
            <person name="Okamura-Oho Y."/>
            <person name="Suzuki H."/>
            <person name="Kawai J."/>
            <person name="Hayashizaki Y."/>
        </authorList>
    </citation>
    <scope>NUCLEOTIDE SEQUENCE [LARGE SCALE MRNA]</scope>
    <source>
        <strain>C57BL/6J</strain>
        <tissue>Medulla oblongata</tissue>
        <tissue>Pancreas</tissue>
    </source>
</reference>
<reference key="3">
    <citation type="journal article" date="2004" name="Genome Res.">
        <title>The status, quality, and expansion of the NIH full-length cDNA project: the Mammalian Gene Collection (MGC).</title>
        <authorList>
            <consortium name="The MGC Project Team"/>
        </authorList>
    </citation>
    <scope>NUCLEOTIDE SEQUENCE [LARGE SCALE MRNA]</scope>
    <source>
        <strain>FVB/N</strain>
        <tissue>Salivary gland</tissue>
    </source>
</reference>
<proteinExistence type="inferred from homology"/>
<evidence type="ECO:0000305" key="1"/>
<accession>Q9WUQ7</accession>
<organism>
    <name type="scientific">Mus musculus</name>
    <name type="common">Mouse</name>
    <dbReference type="NCBI Taxonomy" id="10090"/>
    <lineage>
        <taxon>Eukaryota</taxon>
        <taxon>Metazoa</taxon>
        <taxon>Chordata</taxon>
        <taxon>Craniata</taxon>
        <taxon>Vertebrata</taxon>
        <taxon>Euteleostomi</taxon>
        <taxon>Mammalia</taxon>
        <taxon>Eutheria</taxon>
        <taxon>Euarchontoglires</taxon>
        <taxon>Glires</taxon>
        <taxon>Rodentia</taxon>
        <taxon>Myomorpha</taxon>
        <taxon>Muroidea</taxon>
        <taxon>Muridae</taxon>
        <taxon>Murinae</taxon>
        <taxon>Mus</taxon>
        <taxon>Mus</taxon>
    </lineage>
</organism>
<sequence length="95" mass="10402">MPGARVAAHLDALGPLVSYVQPPLLPSMFYVGLFFVNVLILYYAFLMEYIVLNVGLVFLPEDLDQALVDLGVLSDPGSGLYDADSELDVFDGYLE</sequence>
<keyword id="KW-1185">Reference proteome</keyword>